<keyword id="KW-0008">Acetylcholine receptor inhibiting toxin</keyword>
<keyword id="KW-1015">Disulfide bond</keyword>
<keyword id="KW-0872">Ion channel impairing toxin</keyword>
<keyword id="KW-0528">Neurotoxin</keyword>
<keyword id="KW-0629">Postsynaptic neurotoxin</keyword>
<keyword id="KW-0964">Secreted</keyword>
<keyword id="KW-0732">Signal</keyword>
<keyword id="KW-0800">Toxin</keyword>
<comment type="function">
    <text evidence="3">Binds to muscle nicotinic acetylcholine receptor (nAChR) and inhibit acetylcholine from binding to the receptor, thereby impairing neuromuscular transmission.</text>
</comment>
<comment type="subcellular location">
    <subcellularLocation>
        <location evidence="1">Secreted</location>
    </subcellularLocation>
</comment>
<comment type="tissue specificity">
    <text evidence="4">Expressed by the venom gland.</text>
</comment>
<comment type="similarity">
    <text evidence="4">Belongs to the three-finger toxin family. Short-chain subfamily. Type I alpha-neurotoxin sub-subfamily.</text>
</comment>
<organism>
    <name type="scientific">Cryptophis nigrescens</name>
    <name type="common">Eastern small-eyed snake</name>
    <name type="synonym">Rhinoplocephalus nigrescens</name>
    <dbReference type="NCBI Taxonomy" id="292442"/>
    <lineage>
        <taxon>Eukaryota</taxon>
        <taxon>Metazoa</taxon>
        <taxon>Chordata</taxon>
        <taxon>Craniata</taxon>
        <taxon>Vertebrata</taxon>
        <taxon>Euteleostomi</taxon>
        <taxon>Lepidosauria</taxon>
        <taxon>Squamata</taxon>
        <taxon>Bifurcata</taxon>
        <taxon>Unidentata</taxon>
        <taxon>Episquamata</taxon>
        <taxon>Toxicofera</taxon>
        <taxon>Serpentes</taxon>
        <taxon>Colubroidea</taxon>
        <taxon>Elapidae</taxon>
        <taxon>Hydrophiinae</taxon>
        <taxon>Cryptophis</taxon>
    </lineage>
</organism>
<proteinExistence type="inferred from homology"/>
<protein>
    <recommendedName>
        <fullName>Short neurotoxin 1</fullName>
        <shortName>SNTX-1</shortName>
    </recommendedName>
</protein>
<sequence length="81" mass="9056">MKTLLLTLVVVTIVCLDLGYTMTCCNQQSSQPKTITTCAESSCYKKTWKDHHGTRIERGCGCPPRKPLIDLICCETDECNN</sequence>
<reference key="1">
    <citation type="journal article" date="2007" name="Cell. Mol. Life Sci.">
        <title>Distinct activities of novel neurotoxins from Australian venomous snakes for nicotinic acetylcholine receptors.</title>
        <authorList>
            <person name="St Pierre L."/>
            <person name="Fischer H."/>
            <person name="Adams D.J."/>
            <person name="Schenning M."/>
            <person name="Lavidis N."/>
            <person name="de Jersey J."/>
            <person name="Masci P.P."/>
            <person name="Lavin M.F."/>
        </authorList>
    </citation>
    <scope>NUCLEOTIDE SEQUENCE [MRNA]</scope>
    <source>
        <tissue>Venom gland</tissue>
    </source>
</reference>
<dbReference type="EMBL" id="DQ917502">
    <property type="protein sequence ID" value="ABK63531.1"/>
    <property type="molecule type" value="mRNA"/>
</dbReference>
<dbReference type="SMR" id="A8HDJ7"/>
<dbReference type="GO" id="GO:0005576">
    <property type="term" value="C:extracellular region"/>
    <property type="evidence" value="ECO:0007669"/>
    <property type="project" value="UniProtKB-SubCell"/>
</dbReference>
<dbReference type="GO" id="GO:0030550">
    <property type="term" value="F:acetylcholine receptor inhibitor activity"/>
    <property type="evidence" value="ECO:0007669"/>
    <property type="project" value="UniProtKB-KW"/>
</dbReference>
<dbReference type="GO" id="GO:0099106">
    <property type="term" value="F:ion channel regulator activity"/>
    <property type="evidence" value="ECO:0007669"/>
    <property type="project" value="UniProtKB-KW"/>
</dbReference>
<dbReference type="GO" id="GO:0090729">
    <property type="term" value="F:toxin activity"/>
    <property type="evidence" value="ECO:0007669"/>
    <property type="project" value="UniProtKB-KW"/>
</dbReference>
<dbReference type="CDD" id="cd00206">
    <property type="entry name" value="TFP_snake_toxin"/>
    <property type="match status" value="1"/>
</dbReference>
<dbReference type="Gene3D" id="2.10.60.10">
    <property type="entry name" value="CD59"/>
    <property type="match status" value="1"/>
</dbReference>
<dbReference type="InterPro" id="IPR003571">
    <property type="entry name" value="Snake_3FTx"/>
</dbReference>
<dbReference type="InterPro" id="IPR045860">
    <property type="entry name" value="Snake_toxin-like_sf"/>
</dbReference>
<dbReference type="InterPro" id="IPR018354">
    <property type="entry name" value="Snake_toxin_con_site"/>
</dbReference>
<dbReference type="InterPro" id="IPR054131">
    <property type="entry name" value="Toxin_cobra-type"/>
</dbReference>
<dbReference type="Pfam" id="PF21947">
    <property type="entry name" value="Toxin_cobra-type"/>
    <property type="match status" value="1"/>
</dbReference>
<dbReference type="SUPFAM" id="SSF57302">
    <property type="entry name" value="Snake toxin-like"/>
    <property type="match status" value="1"/>
</dbReference>
<dbReference type="PROSITE" id="PS00272">
    <property type="entry name" value="SNAKE_TOXIN"/>
    <property type="match status" value="1"/>
</dbReference>
<name>3S11_CRYNI</name>
<accession>A8HDJ7</accession>
<feature type="signal peptide" evidence="1">
    <location>
        <begin position="1"/>
        <end position="21"/>
    </location>
</feature>
<feature type="chain" id="PRO_5000279910" description="Short neurotoxin 1">
    <location>
        <begin position="22"/>
        <end position="81"/>
    </location>
</feature>
<feature type="disulfide bond" evidence="2">
    <location>
        <begin position="24"/>
        <end position="43"/>
    </location>
</feature>
<feature type="disulfide bond" evidence="2">
    <location>
        <begin position="38"/>
        <end position="60"/>
    </location>
</feature>
<feature type="disulfide bond" evidence="2">
    <location>
        <begin position="62"/>
        <end position="73"/>
    </location>
</feature>
<feature type="disulfide bond" evidence="2">
    <location>
        <begin position="74"/>
        <end position="79"/>
    </location>
</feature>
<evidence type="ECO:0000250" key="1"/>
<evidence type="ECO:0000250" key="2">
    <source>
        <dbReference type="UniProtKB" id="P0C1Z0"/>
    </source>
</evidence>
<evidence type="ECO:0000250" key="3">
    <source>
        <dbReference type="UniProtKB" id="P60775"/>
    </source>
</evidence>
<evidence type="ECO:0000305" key="4"/>